<protein>
    <recommendedName>
        <fullName evidence="2">Small ribosomal subunit protein eS4x</fullName>
    </recommendedName>
    <alternativeName>
        <fullName>40S ribosomal protein S4-3</fullName>
    </alternativeName>
</protein>
<keyword id="KW-0963">Cytoplasm</keyword>
<keyword id="KW-1185">Reference proteome</keyword>
<keyword id="KW-0687">Ribonucleoprotein</keyword>
<keyword id="KW-0689">Ribosomal protein</keyword>
<keyword id="KW-0694">RNA-binding</keyword>
<keyword id="KW-0699">rRNA-binding</keyword>
<feature type="chain" id="PRO_0000250182" description="Small ribosomal subunit protein eS4x">
    <location>
        <begin position="1"/>
        <end position="262"/>
    </location>
</feature>
<feature type="domain" description="S4 RNA-binding">
    <location>
        <begin position="42"/>
        <end position="104"/>
    </location>
</feature>
<feature type="sequence conflict" description="In Ref. 3; AAL49933/AAN28773." evidence="3" ref="3">
    <original>K</original>
    <variation>E</variation>
    <location>
        <position position="53"/>
    </location>
</feature>
<reference key="1">
    <citation type="submission" date="1999-04" db="EMBL/GenBank/DDBJ databases">
        <title>Structural analysis of Arabidopsis thaliana chromosome 5. XI.</title>
        <authorList>
            <person name="Kaneko T."/>
            <person name="Katoh T."/>
            <person name="Asamizu E."/>
            <person name="Sato S."/>
            <person name="Nakamura Y."/>
            <person name="Kotani H."/>
            <person name="Tabata S."/>
        </authorList>
    </citation>
    <scope>NUCLEOTIDE SEQUENCE [LARGE SCALE GENOMIC DNA]</scope>
    <source>
        <strain>cv. Columbia</strain>
    </source>
</reference>
<reference key="2">
    <citation type="journal article" date="2017" name="Plant J.">
        <title>Araport11: a complete reannotation of the Arabidopsis thaliana reference genome.</title>
        <authorList>
            <person name="Cheng C.Y."/>
            <person name="Krishnakumar V."/>
            <person name="Chan A.P."/>
            <person name="Thibaud-Nissen F."/>
            <person name="Schobel S."/>
            <person name="Town C.D."/>
        </authorList>
    </citation>
    <scope>GENOME REANNOTATION</scope>
    <source>
        <strain>cv. Columbia</strain>
    </source>
</reference>
<reference key="3">
    <citation type="journal article" date="2003" name="Science">
        <title>Empirical analysis of transcriptional activity in the Arabidopsis genome.</title>
        <authorList>
            <person name="Yamada K."/>
            <person name="Lim J."/>
            <person name="Dale J.M."/>
            <person name="Chen H."/>
            <person name="Shinn P."/>
            <person name="Palm C.J."/>
            <person name="Southwick A.M."/>
            <person name="Wu H.C."/>
            <person name="Kim C.J."/>
            <person name="Nguyen M."/>
            <person name="Pham P.K."/>
            <person name="Cheuk R.F."/>
            <person name="Karlin-Newmann G."/>
            <person name="Liu S.X."/>
            <person name="Lam B."/>
            <person name="Sakano H."/>
            <person name="Wu T."/>
            <person name="Yu G."/>
            <person name="Miranda M."/>
            <person name="Quach H.L."/>
            <person name="Tripp M."/>
            <person name="Chang C.H."/>
            <person name="Lee J.M."/>
            <person name="Toriumi M.J."/>
            <person name="Chan M.M."/>
            <person name="Tang C.C."/>
            <person name="Onodera C.S."/>
            <person name="Deng J.M."/>
            <person name="Akiyama K."/>
            <person name="Ansari Y."/>
            <person name="Arakawa T."/>
            <person name="Banh J."/>
            <person name="Banno F."/>
            <person name="Bowser L."/>
            <person name="Brooks S.Y."/>
            <person name="Carninci P."/>
            <person name="Chao Q."/>
            <person name="Choy N."/>
            <person name="Enju A."/>
            <person name="Goldsmith A.D."/>
            <person name="Gurjal M."/>
            <person name="Hansen N.F."/>
            <person name="Hayashizaki Y."/>
            <person name="Johnson-Hopson C."/>
            <person name="Hsuan V.W."/>
            <person name="Iida K."/>
            <person name="Karnes M."/>
            <person name="Khan S."/>
            <person name="Koesema E."/>
            <person name="Ishida J."/>
            <person name="Jiang P.X."/>
            <person name="Jones T."/>
            <person name="Kawai J."/>
            <person name="Kamiya A."/>
            <person name="Meyers C."/>
            <person name="Nakajima M."/>
            <person name="Narusaka M."/>
            <person name="Seki M."/>
            <person name="Sakurai T."/>
            <person name="Satou M."/>
            <person name="Tamse R."/>
            <person name="Vaysberg M."/>
            <person name="Wallender E.K."/>
            <person name="Wong C."/>
            <person name="Yamamura Y."/>
            <person name="Yuan S."/>
            <person name="Shinozaki K."/>
            <person name="Davis R.W."/>
            <person name="Theologis A."/>
            <person name="Ecker J.R."/>
        </authorList>
    </citation>
    <scope>NUCLEOTIDE SEQUENCE [LARGE SCALE MRNA]</scope>
    <source>
        <strain>cv. Columbia</strain>
    </source>
</reference>
<reference key="4">
    <citation type="submission" date="2002-03" db="EMBL/GenBank/DDBJ databases">
        <title>Full-length cDNA from Arabidopsis thaliana.</title>
        <authorList>
            <person name="Brover V.V."/>
            <person name="Troukhan M.E."/>
            <person name="Alexandrov N.A."/>
            <person name="Lu Y.-P."/>
            <person name="Flavell R.B."/>
            <person name="Feldmann K.A."/>
        </authorList>
    </citation>
    <scope>NUCLEOTIDE SEQUENCE [LARGE SCALE MRNA]</scope>
</reference>
<reference key="5">
    <citation type="journal article" date="2001" name="Plant Physiol.">
        <title>The organization of cytoplasmic ribosomal protein genes in the Arabidopsis genome.</title>
        <authorList>
            <person name="Barakat A."/>
            <person name="Szick-Miranda K."/>
            <person name="Chang I.-F."/>
            <person name="Guyot R."/>
            <person name="Blanc G."/>
            <person name="Cooke R."/>
            <person name="Delseny M."/>
            <person name="Bailey-Serres J."/>
        </authorList>
    </citation>
    <scope>GENE FAMILY ORGANIZATION</scope>
    <scope>NOMENCLATURE</scope>
</reference>
<reference key="6">
    <citation type="journal article" date="2023" name="Plant Cell">
        <title>An updated nomenclature for plant ribosomal protein genes.</title>
        <authorList>
            <person name="Scarpin M.R."/>
            <person name="Busche M."/>
            <person name="Martinez R.E."/>
            <person name="Harper L.C."/>
            <person name="Reiser L."/>
            <person name="Szakonyi D."/>
            <person name="Merchante C."/>
            <person name="Lan T."/>
            <person name="Xiong W."/>
            <person name="Mo B."/>
            <person name="Tang G."/>
            <person name="Chen X."/>
            <person name="Bailey-Serres J."/>
            <person name="Browning K.S."/>
            <person name="Brunkard J.O."/>
        </authorList>
    </citation>
    <scope>NOMENCLATURE</scope>
</reference>
<evidence type="ECO:0000250" key="1"/>
<evidence type="ECO:0000303" key="2">
    <source>
    </source>
</evidence>
<evidence type="ECO:0000305" key="3"/>
<organism>
    <name type="scientific">Arabidopsis thaliana</name>
    <name type="common">Mouse-ear cress</name>
    <dbReference type="NCBI Taxonomy" id="3702"/>
    <lineage>
        <taxon>Eukaryota</taxon>
        <taxon>Viridiplantae</taxon>
        <taxon>Streptophyta</taxon>
        <taxon>Embryophyta</taxon>
        <taxon>Tracheophyta</taxon>
        <taxon>Spermatophyta</taxon>
        <taxon>Magnoliopsida</taxon>
        <taxon>eudicotyledons</taxon>
        <taxon>Gunneridae</taxon>
        <taxon>Pentapetalae</taxon>
        <taxon>rosids</taxon>
        <taxon>malvids</taxon>
        <taxon>Brassicales</taxon>
        <taxon>Brassicaceae</taxon>
        <taxon>Camelineae</taxon>
        <taxon>Arabidopsis</taxon>
    </lineage>
</organism>
<comment type="subcellular location">
    <subcellularLocation>
        <location evidence="1">Cytoplasm</location>
    </subcellularLocation>
</comment>
<comment type="similarity">
    <text evidence="3">Belongs to the eukaryotic ribosomal protein eS4 family.</text>
</comment>
<comment type="sequence caution" evidence="3">
    <conflict type="erroneous gene model prediction">
        <sequence resource="EMBL-CDS" id="BAB10257"/>
    </conflict>
</comment>
<dbReference type="EMBL" id="AB025632">
    <property type="protein sequence ID" value="BAB10257.1"/>
    <property type="status" value="ALT_SEQ"/>
    <property type="molecule type" value="Genomic_DNA"/>
</dbReference>
<dbReference type="EMBL" id="CP002688">
    <property type="protein sequence ID" value="AED97051.1"/>
    <property type="molecule type" value="Genomic_DNA"/>
</dbReference>
<dbReference type="EMBL" id="AF428285">
    <property type="protein sequence ID" value="AAL16117.1"/>
    <property type="molecule type" value="mRNA"/>
</dbReference>
<dbReference type="EMBL" id="AY070467">
    <property type="protein sequence ID" value="AAL49933.1"/>
    <property type="molecule type" value="mRNA"/>
</dbReference>
<dbReference type="EMBL" id="AY143834">
    <property type="protein sequence ID" value="AAN28773.1"/>
    <property type="molecule type" value="mRNA"/>
</dbReference>
<dbReference type="EMBL" id="AY086206">
    <property type="protein sequence ID" value="AAM64284.1"/>
    <property type="molecule type" value="mRNA"/>
</dbReference>
<dbReference type="RefSeq" id="NP_200650.1">
    <property type="nucleotide sequence ID" value="NM_125228.4"/>
</dbReference>
<dbReference type="SMR" id="Q8VYK6"/>
<dbReference type="BioGRID" id="21199">
    <property type="interactions" value="165"/>
</dbReference>
<dbReference type="FunCoup" id="Q8VYK6">
    <property type="interactions" value="2863"/>
</dbReference>
<dbReference type="STRING" id="3702.Q8VYK6"/>
<dbReference type="iPTMnet" id="Q8VYK6"/>
<dbReference type="PaxDb" id="3702-AT5G58420.1"/>
<dbReference type="ProteomicsDB" id="226517"/>
<dbReference type="EnsemblPlants" id="AT5G58420.1">
    <property type="protein sequence ID" value="AT5G58420.1"/>
    <property type="gene ID" value="AT5G58420"/>
</dbReference>
<dbReference type="GeneID" id="835955"/>
<dbReference type="Gramene" id="AT5G58420.1">
    <property type="protein sequence ID" value="AT5G58420.1"/>
    <property type="gene ID" value="AT5G58420"/>
</dbReference>
<dbReference type="KEGG" id="ath:AT5G58420"/>
<dbReference type="Araport" id="AT5G58420"/>
<dbReference type="TAIR" id="AT5G58420"/>
<dbReference type="eggNOG" id="KOG0378">
    <property type="taxonomic scope" value="Eukaryota"/>
</dbReference>
<dbReference type="HOGENOM" id="CLU_060400_1_0_1"/>
<dbReference type="InParanoid" id="Q8VYK6"/>
<dbReference type="OMA" id="QRFINID"/>
<dbReference type="OrthoDB" id="671439at2759"/>
<dbReference type="PhylomeDB" id="Q8VYK6"/>
<dbReference type="CD-CODE" id="4299E36E">
    <property type="entry name" value="Nucleolus"/>
</dbReference>
<dbReference type="PRO" id="PR:Q8VYK6"/>
<dbReference type="Proteomes" id="UP000006548">
    <property type="component" value="Chromosome 5"/>
</dbReference>
<dbReference type="ExpressionAtlas" id="Q8VYK6">
    <property type="expression patterns" value="baseline and differential"/>
</dbReference>
<dbReference type="GO" id="GO:0022626">
    <property type="term" value="C:cytosolic ribosome"/>
    <property type="evidence" value="ECO:0007005"/>
    <property type="project" value="TAIR"/>
</dbReference>
<dbReference type="GO" id="GO:0022627">
    <property type="term" value="C:cytosolic small ribosomal subunit"/>
    <property type="evidence" value="ECO:0007005"/>
    <property type="project" value="TAIR"/>
</dbReference>
<dbReference type="GO" id="GO:0005730">
    <property type="term" value="C:nucleolus"/>
    <property type="evidence" value="ECO:0007005"/>
    <property type="project" value="TAIR"/>
</dbReference>
<dbReference type="GO" id="GO:0009536">
    <property type="term" value="C:plastid"/>
    <property type="evidence" value="ECO:0007005"/>
    <property type="project" value="TAIR"/>
</dbReference>
<dbReference type="GO" id="GO:0019843">
    <property type="term" value="F:rRNA binding"/>
    <property type="evidence" value="ECO:0007669"/>
    <property type="project" value="UniProtKB-KW"/>
</dbReference>
<dbReference type="GO" id="GO:0003735">
    <property type="term" value="F:structural constituent of ribosome"/>
    <property type="evidence" value="ECO:0000314"/>
    <property type="project" value="CAFA"/>
</dbReference>
<dbReference type="GO" id="GO:0006412">
    <property type="term" value="P:translation"/>
    <property type="evidence" value="ECO:0007669"/>
    <property type="project" value="InterPro"/>
</dbReference>
<dbReference type="CDD" id="cd06087">
    <property type="entry name" value="KOW_RPS4"/>
    <property type="match status" value="1"/>
</dbReference>
<dbReference type="CDD" id="cd00165">
    <property type="entry name" value="S4"/>
    <property type="match status" value="1"/>
</dbReference>
<dbReference type="FunFam" id="2.30.30.30:FF:000005">
    <property type="entry name" value="40S ribosomal protein S4"/>
    <property type="match status" value="1"/>
</dbReference>
<dbReference type="FunFam" id="2.40.50.740:FF:000001">
    <property type="entry name" value="40S ribosomal protein S4"/>
    <property type="match status" value="1"/>
</dbReference>
<dbReference type="FunFam" id="3.10.290.10:FF:000002">
    <property type="entry name" value="40S ribosomal protein S4"/>
    <property type="match status" value="1"/>
</dbReference>
<dbReference type="Gene3D" id="2.30.30.30">
    <property type="match status" value="1"/>
</dbReference>
<dbReference type="Gene3D" id="2.40.50.740">
    <property type="match status" value="1"/>
</dbReference>
<dbReference type="Gene3D" id="3.10.290.10">
    <property type="entry name" value="RNA-binding S4 domain"/>
    <property type="match status" value="1"/>
</dbReference>
<dbReference type="HAMAP" id="MF_00485">
    <property type="entry name" value="Ribosomal_eS4"/>
    <property type="match status" value="1"/>
</dbReference>
<dbReference type="InterPro" id="IPR005824">
    <property type="entry name" value="KOW"/>
</dbReference>
<dbReference type="InterPro" id="IPR014722">
    <property type="entry name" value="Rib_uL2_dom2"/>
</dbReference>
<dbReference type="InterPro" id="IPR000876">
    <property type="entry name" value="Ribosomal_eS4"/>
</dbReference>
<dbReference type="InterPro" id="IPR032277">
    <property type="entry name" value="Ribosomal_eS4_C"/>
</dbReference>
<dbReference type="InterPro" id="IPR013845">
    <property type="entry name" value="Ribosomal_eS4_central_region"/>
</dbReference>
<dbReference type="InterPro" id="IPR038237">
    <property type="entry name" value="Ribosomal_eS4_central_sf"/>
</dbReference>
<dbReference type="InterPro" id="IPR041982">
    <property type="entry name" value="Ribosomal_eS4_KOW"/>
</dbReference>
<dbReference type="InterPro" id="IPR013843">
    <property type="entry name" value="Ribosomal_eS4_N"/>
</dbReference>
<dbReference type="InterPro" id="IPR018199">
    <property type="entry name" value="Ribosomal_eS4_N_CS"/>
</dbReference>
<dbReference type="InterPro" id="IPR036986">
    <property type="entry name" value="S4_RNA-bd_sf"/>
</dbReference>
<dbReference type="NCBIfam" id="NF003312">
    <property type="entry name" value="PRK04313.1"/>
    <property type="match status" value="1"/>
</dbReference>
<dbReference type="PANTHER" id="PTHR11581">
    <property type="entry name" value="30S/40S RIBOSOMAL PROTEIN S4"/>
    <property type="match status" value="1"/>
</dbReference>
<dbReference type="PANTHER" id="PTHR11581:SF0">
    <property type="entry name" value="SMALL RIBOSOMAL SUBUNIT PROTEIN ES4"/>
    <property type="match status" value="1"/>
</dbReference>
<dbReference type="Pfam" id="PF16121">
    <property type="entry name" value="40S_S4_C"/>
    <property type="match status" value="1"/>
</dbReference>
<dbReference type="Pfam" id="PF00467">
    <property type="entry name" value="KOW"/>
    <property type="match status" value="1"/>
</dbReference>
<dbReference type="Pfam" id="PF00900">
    <property type="entry name" value="Ribosomal_S4e"/>
    <property type="match status" value="1"/>
</dbReference>
<dbReference type="Pfam" id="PF08071">
    <property type="entry name" value="RS4NT"/>
    <property type="match status" value="1"/>
</dbReference>
<dbReference type="PIRSF" id="PIRSF002116">
    <property type="entry name" value="Ribosomal_S4"/>
    <property type="match status" value="1"/>
</dbReference>
<dbReference type="SMART" id="SM00739">
    <property type="entry name" value="KOW"/>
    <property type="match status" value="1"/>
</dbReference>
<dbReference type="PROSITE" id="PS00528">
    <property type="entry name" value="RIBOSOMAL_S4E"/>
    <property type="match status" value="1"/>
</dbReference>
<dbReference type="PROSITE" id="PS50889">
    <property type="entry name" value="S4"/>
    <property type="match status" value="1"/>
</dbReference>
<gene>
    <name type="primary">RPS4D</name>
    <name type="ordered locus">At5g58420</name>
    <name type="ORF">MQJ2_10</name>
</gene>
<name>RS43_ARATH</name>
<sequence length="262" mass="29816">MARGLKKHLKRLNAPKHWMLDKLGGAFAPKPSSGPHKSRECLPLVLIIRNRLKYALTYREVISILMQRHIQVDGKVRTDKTYPAGFMDVVSIPKTNENFRLLYDTKGRFRLHSIKDEEAKFKLCKVRSIQFGQKGIPYLNTYDGRTIRYPDPLIKPNDTIKLDLEANKIVEFIKFDVGNVVMVTGGRNRGRVGVIKNREKHKGSFETIHIQDSTGHEFATRLGNVYTIGKGTKPWVSLPKGKGIKLTIIEEARKRLASQQAA</sequence>
<proteinExistence type="evidence at transcript level"/>
<accession>Q8VYK6</accession>
<accession>Q944M1</accession>
<accession>Q9FGI0</accession>